<keyword id="KW-0150">Chloroplast</keyword>
<keyword id="KW-0456">Lyase</keyword>
<keyword id="KW-0460">Magnesium</keyword>
<keyword id="KW-0479">Metal-binding</keyword>
<keyword id="KW-0934">Plastid</keyword>
<keyword id="KW-0809">Transit peptide</keyword>
<reference key="1">
    <citation type="journal article" date="2014" name="Planta">
        <title>Characterization of two monoterpene synthases involved in floral scent formation in Hedychium coronarium.</title>
        <authorList>
            <person name="Yue Y."/>
            <person name="Yu R."/>
            <person name="Fan Y."/>
        </authorList>
    </citation>
    <scope>NUCLEOTIDE SEQUENCE [MRNA]</scope>
    <scope>FUNCTION</scope>
    <scope>CATALYTIC ACTIVITY</scope>
    <scope>PATHWAY</scope>
    <scope>SUBCELLULAR LOCATION</scope>
    <scope>TISSUE SPECIFICITY</scope>
    <scope>DEVELOPMENTAL STAGE</scope>
    <scope>BIOPHYSICOCHEMICAL PROPERTIES</scope>
    <scope>COFACTOR</scope>
</reference>
<organism>
    <name type="scientific">Hedychium coronarium</name>
    <name type="common">White butterfly ginger-lily</name>
    <dbReference type="NCBI Taxonomy" id="71610"/>
    <lineage>
        <taxon>Eukaryota</taxon>
        <taxon>Viridiplantae</taxon>
        <taxon>Streptophyta</taxon>
        <taxon>Embryophyta</taxon>
        <taxon>Tracheophyta</taxon>
        <taxon>Spermatophyta</taxon>
        <taxon>Magnoliopsida</taxon>
        <taxon>Liliopsida</taxon>
        <taxon>Zingiberales</taxon>
        <taxon>Zingiberaceae</taxon>
        <taxon>Hedychium</taxon>
    </lineage>
</organism>
<gene>
    <name evidence="5" type="primary">TPS7</name>
</gene>
<accession>W6HUT3</accession>
<name>TPS7_HEDCO</name>
<feature type="transit peptide" description="Chloroplast" evidence="3">
    <location>
        <begin position="1"/>
        <end position="39"/>
    </location>
</feature>
<feature type="chain" id="PRO_0000454954" description="Monoterpene synthase 7, chloroplastic">
    <location>
        <begin position="40"/>
        <end position="593"/>
    </location>
</feature>
<feature type="short sequence motif" description="DDXXD motif" evidence="1">
    <location>
        <begin position="348"/>
        <end position="352"/>
    </location>
</feature>
<feature type="binding site" evidence="2">
    <location>
        <position position="348"/>
    </location>
    <ligand>
        <name>Mg(2+)</name>
        <dbReference type="ChEBI" id="CHEBI:18420"/>
        <label>1</label>
    </ligand>
</feature>
<feature type="binding site" evidence="2">
    <location>
        <position position="348"/>
    </location>
    <ligand>
        <name>Mg(2+)</name>
        <dbReference type="ChEBI" id="CHEBI:18420"/>
        <label>2</label>
    </ligand>
</feature>
<feature type="binding site" evidence="2">
    <location>
        <position position="352"/>
    </location>
    <ligand>
        <name>Mg(2+)</name>
        <dbReference type="ChEBI" id="CHEBI:18420"/>
        <label>1</label>
    </ligand>
</feature>
<feature type="binding site" evidence="2">
    <location>
        <position position="352"/>
    </location>
    <ligand>
        <name>Mg(2+)</name>
        <dbReference type="ChEBI" id="CHEBI:18420"/>
        <label>2</label>
    </ligand>
</feature>
<feature type="binding site" evidence="2">
    <location>
        <position position="491"/>
    </location>
    <ligand>
        <name>Mg(2+)</name>
        <dbReference type="ChEBI" id="CHEBI:18420"/>
        <label>3</label>
    </ligand>
</feature>
<feature type="binding site" evidence="2">
    <location>
        <position position="499"/>
    </location>
    <ligand>
        <name>Mg(2+)</name>
        <dbReference type="ChEBI" id="CHEBI:18420"/>
        <label>3</label>
    </ligand>
</feature>
<sequence length="593" mass="68541">MSVSLSFAASATFGFRGGLGGFSRPAAAIKQWRCLPRIQCHSAEQSQSPLRRSGNYQPSIWTHDRIQSLTLSHTADEDDHGERIKLLKCQTNKLMEEKKGEVGEQLQLIDHLQQLGVAYHFKDEIKDTLRGFYASFEDISLQFKDNLHASALLFRLLRENGFSVSEDIFKKFKDDQKGQFEDRLQSQAEGLLSLYEASYLEKDGEELLHEAREFTTKHLKNLLEEEGSLKPGLIREQVAYALELPLNRRFQRLHTKWFIGAWQRDPTMDPALLLLAKLDFNALQNMYKRELNEVSRWWTDLGLPQKLPFFRDRLTENYLWAVVFAFEPDSWAFREMDTKTNCFITMIDDVYDVYGTLDELELFTDIMERWDVNAIDKLPEYMKICFLAVFNTVNDAGYEVMRDKGVNIIPYLKRAWAELCKMYMREARWYHTGYTPTLDEYLDGAWISISGALILSTAYCMGKDLTKEDLDKFSTYPSIVQPSCMLLRLHDDFGTSTEELARGDVQKAVQCCMHERKVPEAVAREHIKQVMEAKWRVLNGNRVAASSFEEYFQNVAINLPRAAQFFYGKGDGYANADGETQKQVMSLLIEPVQ</sequence>
<evidence type="ECO:0000250" key="1">
    <source>
        <dbReference type="UniProtKB" id="A0A1C9J6A7"/>
    </source>
</evidence>
<evidence type="ECO:0000250" key="2">
    <source>
        <dbReference type="UniProtKB" id="Q40577"/>
    </source>
</evidence>
<evidence type="ECO:0000255" key="3"/>
<evidence type="ECO:0000269" key="4">
    <source>
    </source>
</evidence>
<evidence type="ECO:0000303" key="5">
    <source>
    </source>
</evidence>
<evidence type="ECO:0000305" key="6"/>
<comment type="function">
    <text evidence="4">Monoterpene synthase involved in the biosynthesis of volatile compounds present in floral scent (PubMed:25056927). Mediates the conversion of (2E)-geranyl diphosphate (GPP) into sabinene and sub-products such as alpha-thujene, alpha-pinene, beta-pinene, myrcene, alpha-phellandrene, alpha-terpinene, beta-phellandrene, gamma-terpinene and terpinolene (PubMed:25056927). Unable to use farnesyl diphosphate (FPP) as substrate (PubMed:25056927).</text>
</comment>
<comment type="catalytic activity">
    <reaction evidence="4">
        <text>(2E)-geranyl diphosphate = sabinene + diphosphate</text>
        <dbReference type="Rhea" id="RHEA:68636"/>
        <dbReference type="ChEBI" id="CHEBI:33019"/>
        <dbReference type="ChEBI" id="CHEBI:50027"/>
        <dbReference type="ChEBI" id="CHEBI:58057"/>
    </reaction>
    <physiologicalReaction direction="left-to-right" evidence="4">
        <dbReference type="Rhea" id="RHEA:68637"/>
    </physiologicalReaction>
</comment>
<comment type="catalytic activity">
    <reaction evidence="4">
        <text>(2E)-geranyl diphosphate = terpinolene + diphosphate</text>
        <dbReference type="Rhea" id="RHEA:25500"/>
        <dbReference type="ChEBI" id="CHEBI:9457"/>
        <dbReference type="ChEBI" id="CHEBI:33019"/>
        <dbReference type="ChEBI" id="CHEBI:58057"/>
        <dbReference type="EC" id="4.2.3.113"/>
    </reaction>
    <physiologicalReaction direction="left-to-right" evidence="4">
        <dbReference type="Rhea" id="RHEA:25501"/>
    </physiologicalReaction>
</comment>
<comment type="catalytic activity">
    <reaction evidence="4">
        <text>(2E)-geranyl diphosphate = alpha-pinene + diphosphate</text>
        <dbReference type="Rhea" id="RHEA:25662"/>
        <dbReference type="ChEBI" id="CHEBI:33019"/>
        <dbReference type="ChEBI" id="CHEBI:36740"/>
        <dbReference type="ChEBI" id="CHEBI:58057"/>
    </reaction>
    <physiologicalReaction direction="left-to-right" evidence="4">
        <dbReference type="Rhea" id="RHEA:25663"/>
    </physiologicalReaction>
</comment>
<comment type="catalytic activity">
    <reaction evidence="4">
        <text>(2E)-geranyl diphosphate = beta-pinene + diphosphate</text>
        <dbReference type="Rhea" id="RHEA:25666"/>
        <dbReference type="ChEBI" id="CHEBI:33019"/>
        <dbReference type="ChEBI" id="CHEBI:50025"/>
        <dbReference type="ChEBI" id="CHEBI:58057"/>
    </reaction>
    <physiologicalReaction direction="left-to-right" evidence="4">
        <dbReference type="Rhea" id="RHEA:25667"/>
    </physiologicalReaction>
</comment>
<comment type="catalytic activity">
    <reaction evidence="4">
        <text>(2E)-geranyl diphosphate = beta-myrcene + diphosphate</text>
        <dbReference type="Rhea" id="RHEA:16965"/>
        <dbReference type="ChEBI" id="CHEBI:17221"/>
        <dbReference type="ChEBI" id="CHEBI:33019"/>
        <dbReference type="ChEBI" id="CHEBI:58057"/>
        <dbReference type="EC" id="4.2.3.15"/>
    </reaction>
    <physiologicalReaction direction="left-to-right" evidence="4">
        <dbReference type="Rhea" id="RHEA:16966"/>
    </physiologicalReaction>
</comment>
<comment type="catalytic activity">
    <reaction evidence="4">
        <text>(2E)-geranyl diphosphate = alpha-terpinene + diphosphate</text>
        <dbReference type="Rhea" id="RHEA:32563"/>
        <dbReference type="ChEBI" id="CHEBI:10334"/>
        <dbReference type="ChEBI" id="CHEBI:33019"/>
        <dbReference type="ChEBI" id="CHEBI:58057"/>
        <dbReference type="EC" id="4.2.3.115"/>
    </reaction>
    <physiologicalReaction direction="left-to-right" evidence="4">
        <dbReference type="Rhea" id="RHEA:32564"/>
    </physiologicalReaction>
</comment>
<comment type="catalytic activity">
    <reaction evidence="4">
        <text>(2E)-geranyl diphosphate = beta-phellandrene + diphosphate</text>
        <dbReference type="Rhea" id="RHEA:25504"/>
        <dbReference type="ChEBI" id="CHEBI:33019"/>
        <dbReference type="ChEBI" id="CHEBI:48741"/>
        <dbReference type="ChEBI" id="CHEBI:58057"/>
    </reaction>
    <physiologicalReaction direction="left-to-right" evidence="4">
        <dbReference type="Rhea" id="RHEA:25505"/>
    </physiologicalReaction>
</comment>
<comment type="catalytic activity">
    <reaction evidence="4">
        <text>(2E)-geranyl diphosphate = gamma-terpinene + diphosphate</text>
        <dbReference type="Rhea" id="RHEA:32559"/>
        <dbReference type="ChEBI" id="CHEBI:10577"/>
        <dbReference type="ChEBI" id="CHEBI:33019"/>
        <dbReference type="ChEBI" id="CHEBI:58057"/>
        <dbReference type="EC" id="4.2.3.114"/>
    </reaction>
    <physiologicalReaction direction="left-to-right" evidence="4">
        <dbReference type="Rhea" id="RHEA:32560"/>
    </physiologicalReaction>
</comment>
<comment type="cofactor">
    <cofactor evidence="4">
        <name>Mg(2+)</name>
        <dbReference type="ChEBI" id="CHEBI:18420"/>
    </cofactor>
    <cofactor evidence="4">
        <name>Mn(2+)</name>
        <dbReference type="ChEBI" id="CHEBI:29035"/>
    </cofactor>
    <text evidence="1">Binds 3 Mg(2+) or Mn(2+) ions per subunit.</text>
</comment>
<comment type="biophysicochemical properties">
    <kinetics>
        <KM evidence="4">26.49 uM for (2E)-geranyl diphosphate</KM>
        <Vmax evidence="4">928.92 pmol/sec/mg enzyme with (2E)-geranyl diphosphate as substrate</Vmax>
        <text evidence="4">kcat is 0.057 sec(-1) with (2E)-geranyl diphosphate as substrate.</text>
    </kinetics>
    <phDependence>
        <text evidence="4">Optimum pH is 7.5 (PubMed:25056927). Active at pH between 6.0 and 9.0 (PubMed:25056927).</text>
    </phDependence>
    <temperatureDependence>
        <text evidence="4">Optimum temperature is 30 degrees Celsius.</text>
    </temperatureDependence>
</comment>
<comment type="pathway">
    <text evidence="4">Secondary metabolite biosynthesis; terpenoid biosynthesis.</text>
</comment>
<comment type="subcellular location">
    <subcellularLocation>
        <location evidence="4">Plastid</location>
        <location evidence="4">Chloroplast</location>
    </subcellularLocation>
</comment>
<comment type="tissue specificity">
    <text evidence="4">Highly expressed in flowers, petals and sepals, but almost undetectable in vegetative organs.</text>
</comment>
<comment type="developmental stage">
    <text evidence="4">During flower development, first observed in petals after about 40 hours, with a sharp increase between 32 and 48 hours, and a decrease during flower senescence.</text>
</comment>
<comment type="domain">
    <text evidence="2">The Asp-Asp-Xaa-Xaa-Asp/Glu (DDXXD/E) motif is important for the catalytic activity, presumably through binding to Mg(2+).</text>
</comment>
<comment type="similarity">
    <text evidence="6">Belongs to the terpene synthase family. Tpsa subfamily.</text>
</comment>
<proteinExistence type="evidence at protein level"/>
<dbReference type="EC" id="4.2.3.-" evidence="4"/>
<dbReference type="EC" id="4.2.3.115" evidence="4"/>
<dbReference type="EC" id="4.2.3.114" evidence="4"/>
<dbReference type="EC" id="4.2.3.15" evidence="4"/>
<dbReference type="EC" id="4.2.3.113" evidence="4"/>
<dbReference type="EMBL" id="KF765488">
    <property type="protein sequence ID" value="AHJ57305.1"/>
    <property type="molecule type" value="mRNA"/>
</dbReference>
<dbReference type="SMR" id="W6HUT3"/>
<dbReference type="UniPathway" id="UPA00213"/>
<dbReference type="GO" id="GO:0009507">
    <property type="term" value="C:chloroplast"/>
    <property type="evidence" value="ECO:0000314"/>
    <property type="project" value="UniProtKB"/>
</dbReference>
<dbReference type="GO" id="GO:0102903">
    <property type="term" value="F:gamma-terpinene synthase activity"/>
    <property type="evidence" value="ECO:0000314"/>
    <property type="project" value="UniProtKB"/>
</dbReference>
<dbReference type="GO" id="GO:0000287">
    <property type="term" value="F:magnesium ion binding"/>
    <property type="evidence" value="ECO:0007669"/>
    <property type="project" value="InterPro"/>
</dbReference>
<dbReference type="GO" id="GO:0050551">
    <property type="term" value="F:myrcene synthase activity"/>
    <property type="evidence" value="ECO:0000314"/>
    <property type="project" value="UniProtKB"/>
</dbReference>
<dbReference type="GO" id="GO:0050550">
    <property type="term" value="F:pinene synthase activity"/>
    <property type="evidence" value="ECO:0000314"/>
    <property type="project" value="UniProtKB"/>
</dbReference>
<dbReference type="GO" id="GO:0080015">
    <property type="term" value="F:sabinene synthase activity"/>
    <property type="evidence" value="ECO:0000314"/>
    <property type="project" value="UniProtKB"/>
</dbReference>
<dbReference type="GO" id="GO:0010333">
    <property type="term" value="F:terpene synthase activity"/>
    <property type="evidence" value="ECO:0000314"/>
    <property type="project" value="UniProtKB"/>
</dbReference>
<dbReference type="GO" id="GO:0016102">
    <property type="term" value="P:diterpenoid biosynthetic process"/>
    <property type="evidence" value="ECO:0007669"/>
    <property type="project" value="InterPro"/>
</dbReference>
<dbReference type="GO" id="GO:0010597">
    <property type="term" value="P:green leaf volatile biosynthetic process"/>
    <property type="evidence" value="ECO:0000314"/>
    <property type="project" value="UniProtKB"/>
</dbReference>
<dbReference type="GO" id="GO:0016099">
    <property type="term" value="P:monoterpenoid biosynthetic process"/>
    <property type="evidence" value="ECO:0000314"/>
    <property type="project" value="UniProtKB"/>
</dbReference>
<dbReference type="CDD" id="cd00684">
    <property type="entry name" value="Terpene_cyclase_plant_C1"/>
    <property type="match status" value="1"/>
</dbReference>
<dbReference type="FunFam" id="1.10.600.10:FF:000007">
    <property type="entry name" value="Isoprene synthase, chloroplastic"/>
    <property type="match status" value="1"/>
</dbReference>
<dbReference type="FunFam" id="1.50.10.130:FF:000001">
    <property type="entry name" value="Isoprene synthase, chloroplastic"/>
    <property type="match status" value="1"/>
</dbReference>
<dbReference type="Gene3D" id="1.10.600.10">
    <property type="entry name" value="Farnesyl Diphosphate Synthase"/>
    <property type="match status" value="1"/>
</dbReference>
<dbReference type="Gene3D" id="1.50.10.130">
    <property type="entry name" value="Terpene synthase, N-terminal domain"/>
    <property type="match status" value="1"/>
</dbReference>
<dbReference type="InterPro" id="IPR008949">
    <property type="entry name" value="Isoprenoid_synthase_dom_sf"/>
</dbReference>
<dbReference type="InterPro" id="IPR034741">
    <property type="entry name" value="Terpene_cyclase-like_1_C"/>
</dbReference>
<dbReference type="InterPro" id="IPR044814">
    <property type="entry name" value="Terpene_cyclase_plant_C1"/>
</dbReference>
<dbReference type="InterPro" id="IPR001906">
    <property type="entry name" value="Terpene_synth_N"/>
</dbReference>
<dbReference type="InterPro" id="IPR036965">
    <property type="entry name" value="Terpene_synth_N_sf"/>
</dbReference>
<dbReference type="InterPro" id="IPR050148">
    <property type="entry name" value="Terpene_synthase-like"/>
</dbReference>
<dbReference type="InterPro" id="IPR005630">
    <property type="entry name" value="Terpene_synthase_metal-bd"/>
</dbReference>
<dbReference type="InterPro" id="IPR008930">
    <property type="entry name" value="Terpenoid_cyclase/PrenylTrfase"/>
</dbReference>
<dbReference type="PANTHER" id="PTHR31225">
    <property type="entry name" value="OS04G0344100 PROTEIN-RELATED"/>
    <property type="match status" value="1"/>
</dbReference>
<dbReference type="PANTHER" id="PTHR31225:SF252">
    <property type="entry name" value="TERPENE SYNTHASE 12-RELATED"/>
    <property type="match status" value="1"/>
</dbReference>
<dbReference type="Pfam" id="PF01397">
    <property type="entry name" value="Terpene_synth"/>
    <property type="match status" value="1"/>
</dbReference>
<dbReference type="Pfam" id="PF03936">
    <property type="entry name" value="Terpene_synth_C"/>
    <property type="match status" value="1"/>
</dbReference>
<dbReference type="SFLD" id="SFLDS00005">
    <property type="entry name" value="Isoprenoid_Synthase_Type_I"/>
    <property type="match status" value="1"/>
</dbReference>
<dbReference type="SFLD" id="SFLDG01019">
    <property type="entry name" value="Terpene_Cyclase_Like_1_C_Termi"/>
    <property type="match status" value="1"/>
</dbReference>
<dbReference type="SUPFAM" id="SSF48239">
    <property type="entry name" value="Terpenoid cyclases/Protein prenyltransferases"/>
    <property type="match status" value="1"/>
</dbReference>
<dbReference type="SUPFAM" id="SSF48576">
    <property type="entry name" value="Terpenoid synthases"/>
    <property type="match status" value="1"/>
</dbReference>
<protein>
    <recommendedName>
        <fullName evidence="5">Monoterpene synthase 7, chloroplastic</fullName>
        <shortName evidence="5">HcTPS7</shortName>
    </recommendedName>
    <alternativeName>
        <fullName evidence="5">Alpha-pinene synthase</fullName>
        <ecNumber evidence="4">4.2.3.-</ecNumber>
    </alternativeName>
    <alternativeName>
        <fullName evidence="5">Alpha-terpinene synthase</fullName>
        <ecNumber evidence="4">4.2.3.115</ecNumber>
    </alternativeName>
    <alternativeName>
        <fullName evidence="5">Beta-phellandrene synthase</fullName>
        <ecNumber evidence="4">4.2.3.-</ecNumber>
    </alternativeName>
    <alternativeName>
        <fullName evidence="5">Beta-pinene synthase</fullName>
        <ecNumber evidence="4">4.2.3.-</ecNumber>
    </alternativeName>
    <alternativeName>
        <fullName evidence="5">Gamma-terpinene synthase</fullName>
        <ecNumber evidence="4">4.2.3.114</ecNumber>
    </alternativeName>
    <alternativeName>
        <fullName evidence="5">Myrcene synthase</fullName>
        <ecNumber evidence="4">4.2.3.15</ecNumber>
    </alternativeName>
    <alternativeName>
        <fullName evidence="5">Sabinene synthase</fullName>
        <ecNumber evidence="4">4.2.3.-</ecNumber>
    </alternativeName>
    <alternativeName>
        <fullName evidence="5">Terpinolene synthase</fullName>
        <ecNumber evidence="4">4.2.3.113</ecNumber>
    </alternativeName>
</protein>